<sequence length="409" mass="45006">MMKVLLSGGGTGGHVYPAIAIANKIRDEHPDAEIIFVGTEKGIESEIVPKYGFELKTVTVQGFKRKIDFDNVKRVFKLFKGLEQSRKIVKKFKPDIVIGTGGYVSGPVLFNASMGKIPAIIHEQNSFPGVTNKILSKTVTKVLTSFEDSHKRFPEAAEDKLVFTGNPVRKEILLSRKNIARKNLSISDEKRMVLCYGGSGGSRKINDAMRLVIKNMVNEDIAFIFATGKSYYDEFMGSISDINLKPYQKVVPYLEDMANALAASDLVIGSAGAISLAEITALGKPSIIIPKAYTAENHQEYNAKSIEKQGAGIAILEKNLTPESLNTAVFKLLGDRELLVDMANASKTIGKPEAIDLIYDEIMKVYNSTQKSTSKKTKKEKVIKEVKEIKKETTPSIEGQAKVIGIKKR</sequence>
<gene>
    <name evidence="1" type="primary">murG</name>
    <name type="ordered locus">CD630_26510</name>
</gene>
<dbReference type="EC" id="2.4.1.227" evidence="1"/>
<dbReference type="EMBL" id="AM180355">
    <property type="protein sequence ID" value="CAJ69537.1"/>
    <property type="molecule type" value="Genomic_DNA"/>
</dbReference>
<dbReference type="RefSeq" id="YP_001089162.1">
    <property type="nucleotide sequence ID" value="NC_009089.1"/>
</dbReference>
<dbReference type="SMR" id="Q182Y6"/>
<dbReference type="STRING" id="272563.CD630_26510"/>
<dbReference type="CAZy" id="GT28">
    <property type="family name" value="Glycosyltransferase Family 28"/>
</dbReference>
<dbReference type="EnsemblBacteria" id="CAJ69537">
    <property type="protein sequence ID" value="CAJ69537"/>
    <property type="gene ID" value="CD630_26510"/>
</dbReference>
<dbReference type="KEGG" id="cdf:CD630_26510"/>
<dbReference type="PATRIC" id="fig|272563.8.peg.2775"/>
<dbReference type="eggNOG" id="COG0707">
    <property type="taxonomic scope" value="Bacteria"/>
</dbReference>
<dbReference type="OrthoDB" id="9808936at2"/>
<dbReference type="PhylomeDB" id="Q182Y6"/>
<dbReference type="BioCyc" id="PDIF272563:G12WB-2802-MONOMER"/>
<dbReference type="UniPathway" id="UPA00219"/>
<dbReference type="Proteomes" id="UP000001978">
    <property type="component" value="Chromosome"/>
</dbReference>
<dbReference type="GO" id="GO:0005886">
    <property type="term" value="C:plasma membrane"/>
    <property type="evidence" value="ECO:0007669"/>
    <property type="project" value="UniProtKB-SubCell"/>
</dbReference>
<dbReference type="GO" id="GO:0051991">
    <property type="term" value="F:UDP-N-acetyl-D-glucosamine:N-acetylmuramoyl-L-alanyl-D-glutamyl-meso-2,6-diaminopimelyl-D-alanyl-D-alanine-diphosphoundecaprenol 4-beta-N-acetylglucosaminlytransferase activity"/>
    <property type="evidence" value="ECO:0007669"/>
    <property type="project" value="RHEA"/>
</dbReference>
<dbReference type="GO" id="GO:0050511">
    <property type="term" value="F:undecaprenyldiphospho-muramoylpentapeptide beta-N-acetylglucosaminyltransferase activity"/>
    <property type="evidence" value="ECO:0007669"/>
    <property type="project" value="UniProtKB-UniRule"/>
</dbReference>
<dbReference type="GO" id="GO:0005975">
    <property type="term" value="P:carbohydrate metabolic process"/>
    <property type="evidence" value="ECO:0007669"/>
    <property type="project" value="InterPro"/>
</dbReference>
<dbReference type="GO" id="GO:0051301">
    <property type="term" value="P:cell division"/>
    <property type="evidence" value="ECO:0007669"/>
    <property type="project" value="UniProtKB-KW"/>
</dbReference>
<dbReference type="GO" id="GO:0071555">
    <property type="term" value="P:cell wall organization"/>
    <property type="evidence" value="ECO:0007669"/>
    <property type="project" value="UniProtKB-KW"/>
</dbReference>
<dbReference type="GO" id="GO:0030259">
    <property type="term" value="P:lipid glycosylation"/>
    <property type="evidence" value="ECO:0007669"/>
    <property type="project" value="UniProtKB-UniRule"/>
</dbReference>
<dbReference type="GO" id="GO:0009252">
    <property type="term" value="P:peptidoglycan biosynthetic process"/>
    <property type="evidence" value="ECO:0007669"/>
    <property type="project" value="UniProtKB-UniRule"/>
</dbReference>
<dbReference type="GO" id="GO:0008360">
    <property type="term" value="P:regulation of cell shape"/>
    <property type="evidence" value="ECO:0007669"/>
    <property type="project" value="UniProtKB-KW"/>
</dbReference>
<dbReference type="CDD" id="cd03785">
    <property type="entry name" value="GT28_MurG"/>
    <property type="match status" value="1"/>
</dbReference>
<dbReference type="Gene3D" id="3.40.50.2000">
    <property type="entry name" value="Glycogen Phosphorylase B"/>
    <property type="match status" value="2"/>
</dbReference>
<dbReference type="HAMAP" id="MF_00033">
    <property type="entry name" value="MurG"/>
    <property type="match status" value="1"/>
</dbReference>
<dbReference type="InterPro" id="IPR006009">
    <property type="entry name" value="GlcNAc_MurG"/>
</dbReference>
<dbReference type="InterPro" id="IPR007235">
    <property type="entry name" value="Glyco_trans_28_C"/>
</dbReference>
<dbReference type="InterPro" id="IPR004276">
    <property type="entry name" value="GlycoTrans_28_N"/>
</dbReference>
<dbReference type="NCBIfam" id="TIGR01133">
    <property type="entry name" value="murG"/>
    <property type="match status" value="1"/>
</dbReference>
<dbReference type="PANTHER" id="PTHR21015:SF22">
    <property type="entry name" value="GLYCOSYLTRANSFERASE"/>
    <property type="match status" value="1"/>
</dbReference>
<dbReference type="PANTHER" id="PTHR21015">
    <property type="entry name" value="UDP-N-ACETYLGLUCOSAMINE--N-ACETYLMURAMYL-(PENTAPEPTIDE) PYROPHOSPHORYL-UNDECAPRENOL N-ACETYLGLUCOSAMINE TRANSFERASE 1"/>
    <property type="match status" value="1"/>
</dbReference>
<dbReference type="Pfam" id="PF04101">
    <property type="entry name" value="Glyco_tran_28_C"/>
    <property type="match status" value="1"/>
</dbReference>
<dbReference type="Pfam" id="PF03033">
    <property type="entry name" value="Glyco_transf_28"/>
    <property type="match status" value="1"/>
</dbReference>
<dbReference type="SUPFAM" id="SSF53756">
    <property type="entry name" value="UDP-Glycosyltransferase/glycogen phosphorylase"/>
    <property type="match status" value="1"/>
</dbReference>
<reference key="1">
    <citation type="journal article" date="2006" name="Nat. Genet.">
        <title>The multidrug-resistant human pathogen Clostridium difficile has a highly mobile, mosaic genome.</title>
        <authorList>
            <person name="Sebaihia M."/>
            <person name="Wren B.W."/>
            <person name="Mullany P."/>
            <person name="Fairweather N.F."/>
            <person name="Minton N."/>
            <person name="Stabler R."/>
            <person name="Thomson N.R."/>
            <person name="Roberts A.P."/>
            <person name="Cerdeno-Tarraga A.M."/>
            <person name="Wang H."/>
            <person name="Holden M.T.G."/>
            <person name="Wright A."/>
            <person name="Churcher C."/>
            <person name="Quail M.A."/>
            <person name="Baker S."/>
            <person name="Bason N."/>
            <person name="Brooks K."/>
            <person name="Chillingworth T."/>
            <person name="Cronin A."/>
            <person name="Davis P."/>
            <person name="Dowd L."/>
            <person name="Fraser A."/>
            <person name="Feltwell T."/>
            <person name="Hance Z."/>
            <person name="Holroyd S."/>
            <person name="Jagels K."/>
            <person name="Moule S."/>
            <person name="Mungall K."/>
            <person name="Price C."/>
            <person name="Rabbinowitsch E."/>
            <person name="Sharp S."/>
            <person name="Simmonds M."/>
            <person name="Stevens K."/>
            <person name="Unwin L."/>
            <person name="Whithead S."/>
            <person name="Dupuy B."/>
            <person name="Dougan G."/>
            <person name="Barrell B."/>
            <person name="Parkhill J."/>
        </authorList>
    </citation>
    <scope>NUCLEOTIDE SEQUENCE [LARGE SCALE GENOMIC DNA]</scope>
    <source>
        <strain>630</strain>
    </source>
</reference>
<protein>
    <recommendedName>
        <fullName evidence="1">UDP-N-acetylglucosamine--N-acetylmuramyl-(pentapeptide) pyrophosphoryl-undecaprenol N-acetylglucosamine transferase</fullName>
        <ecNumber evidence="1">2.4.1.227</ecNumber>
    </recommendedName>
    <alternativeName>
        <fullName evidence="1">Undecaprenyl-PP-MurNAc-pentapeptide-UDPGlcNAc GlcNAc transferase</fullName>
    </alternativeName>
</protein>
<comment type="function">
    <text evidence="1">Cell wall formation. Catalyzes the transfer of a GlcNAc subunit on undecaprenyl-pyrophosphoryl-MurNAc-pentapeptide (lipid intermediate I) to form undecaprenyl-pyrophosphoryl-MurNAc-(pentapeptide)GlcNAc (lipid intermediate II).</text>
</comment>
<comment type="catalytic activity">
    <reaction evidence="1">
        <text>di-trans,octa-cis-undecaprenyl diphospho-N-acetyl-alpha-D-muramoyl-L-alanyl-D-glutamyl-meso-2,6-diaminopimeloyl-D-alanyl-D-alanine + UDP-N-acetyl-alpha-D-glucosamine = di-trans,octa-cis-undecaprenyl diphospho-[N-acetyl-alpha-D-glucosaminyl-(1-&gt;4)]-N-acetyl-alpha-D-muramoyl-L-alanyl-D-glutamyl-meso-2,6-diaminopimeloyl-D-alanyl-D-alanine + UDP + H(+)</text>
        <dbReference type="Rhea" id="RHEA:31227"/>
        <dbReference type="ChEBI" id="CHEBI:15378"/>
        <dbReference type="ChEBI" id="CHEBI:57705"/>
        <dbReference type="ChEBI" id="CHEBI:58223"/>
        <dbReference type="ChEBI" id="CHEBI:61387"/>
        <dbReference type="ChEBI" id="CHEBI:61388"/>
        <dbReference type="EC" id="2.4.1.227"/>
    </reaction>
</comment>
<comment type="pathway">
    <text evidence="1">Cell wall biogenesis; peptidoglycan biosynthesis.</text>
</comment>
<comment type="subcellular location">
    <subcellularLocation>
        <location evidence="1">Cell membrane</location>
        <topology evidence="1">Peripheral membrane protein</topology>
        <orientation evidence="1">Cytoplasmic side</orientation>
    </subcellularLocation>
</comment>
<comment type="similarity">
    <text evidence="1">Belongs to the glycosyltransferase 28 family. MurG subfamily.</text>
</comment>
<keyword id="KW-0131">Cell cycle</keyword>
<keyword id="KW-0132">Cell division</keyword>
<keyword id="KW-1003">Cell membrane</keyword>
<keyword id="KW-0133">Cell shape</keyword>
<keyword id="KW-0961">Cell wall biogenesis/degradation</keyword>
<keyword id="KW-0328">Glycosyltransferase</keyword>
<keyword id="KW-0472">Membrane</keyword>
<keyword id="KW-0573">Peptidoglycan synthesis</keyword>
<keyword id="KW-1185">Reference proteome</keyword>
<keyword id="KW-0808">Transferase</keyword>
<proteinExistence type="inferred from homology"/>
<organism>
    <name type="scientific">Clostridioides difficile (strain 630)</name>
    <name type="common">Peptoclostridium difficile</name>
    <dbReference type="NCBI Taxonomy" id="272563"/>
    <lineage>
        <taxon>Bacteria</taxon>
        <taxon>Bacillati</taxon>
        <taxon>Bacillota</taxon>
        <taxon>Clostridia</taxon>
        <taxon>Peptostreptococcales</taxon>
        <taxon>Peptostreptococcaceae</taxon>
        <taxon>Clostridioides</taxon>
    </lineage>
</organism>
<evidence type="ECO:0000255" key="1">
    <source>
        <dbReference type="HAMAP-Rule" id="MF_00033"/>
    </source>
</evidence>
<accession>Q182Y6</accession>
<feature type="chain" id="PRO_0000315085" description="UDP-N-acetylglucosamine--N-acetylmuramyl-(pentapeptide) pyrophosphoryl-undecaprenol N-acetylglucosamine transferase">
    <location>
        <begin position="1"/>
        <end position="409"/>
    </location>
</feature>
<feature type="binding site" evidence="1">
    <location>
        <begin position="11"/>
        <end position="13"/>
    </location>
    <ligand>
        <name>UDP-N-acetyl-alpha-D-glucosamine</name>
        <dbReference type="ChEBI" id="CHEBI:57705"/>
    </ligand>
</feature>
<feature type="binding site" evidence="1">
    <location>
        <position position="125"/>
    </location>
    <ligand>
        <name>UDP-N-acetyl-alpha-D-glucosamine</name>
        <dbReference type="ChEBI" id="CHEBI:57705"/>
    </ligand>
</feature>
<feature type="binding site" evidence="1">
    <location>
        <position position="169"/>
    </location>
    <ligand>
        <name>UDP-N-acetyl-alpha-D-glucosamine</name>
        <dbReference type="ChEBI" id="CHEBI:57705"/>
    </ligand>
</feature>
<feature type="binding site" evidence="1">
    <location>
        <position position="199"/>
    </location>
    <ligand>
        <name>UDP-N-acetyl-alpha-D-glucosamine</name>
        <dbReference type="ChEBI" id="CHEBI:57705"/>
    </ligand>
</feature>
<feature type="binding site" evidence="1">
    <location>
        <position position="299"/>
    </location>
    <ligand>
        <name>UDP-N-acetyl-alpha-D-glucosamine</name>
        <dbReference type="ChEBI" id="CHEBI:57705"/>
    </ligand>
</feature>
<name>MURG_CLOD6</name>